<keyword id="KW-0046">Antibiotic resistance</keyword>
<keyword id="KW-1003">Cell membrane</keyword>
<keyword id="KW-0472">Membrane</keyword>
<keyword id="KW-0812">Transmembrane</keyword>
<keyword id="KW-1133">Transmembrane helix</keyword>
<keyword id="KW-0813">Transport</keyword>
<feature type="chain" id="PRO_0000064895" description="Bacitracin transport permease protein BcrC">
    <location>
        <begin position="1"/>
        <end position="203"/>
    </location>
</feature>
<feature type="transmembrane region" description="Helical" evidence="1">
    <location>
        <begin position="27"/>
        <end position="47"/>
    </location>
</feature>
<feature type="transmembrane region" description="Helical" evidence="1">
    <location>
        <begin position="56"/>
        <end position="76"/>
    </location>
</feature>
<feature type="transmembrane region" description="Helical" evidence="1">
    <location>
        <begin position="103"/>
        <end position="121"/>
    </location>
</feature>
<feature type="transmembrane region" description="Helical" evidence="1">
    <location>
        <begin position="126"/>
        <end position="143"/>
    </location>
</feature>
<feature type="transmembrane region" description="Helical" evidence="1">
    <location>
        <begin position="149"/>
        <end position="169"/>
    </location>
</feature>
<accession>P42334</accession>
<organism>
    <name type="scientific">Bacillus licheniformis</name>
    <dbReference type="NCBI Taxonomy" id="1402"/>
    <lineage>
        <taxon>Bacteria</taxon>
        <taxon>Bacillati</taxon>
        <taxon>Bacillota</taxon>
        <taxon>Bacilli</taxon>
        <taxon>Bacillales</taxon>
        <taxon>Bacillaceae</taxon>
        <taxon>Bacillus</taxon>
    </lineage>
</organism>
<name>BCRC_BACLI</name>
<gene>
    <name type="primary">bcrC</name>
</gene>
<proteinExistence type="inferred from homology"/>
<comment type="function">
    <text>Part of the binding-protein-dependent transport system for bacitracin that confer resistance to this antibiotic; probably responsible for the translocation of the substrate across the membrane.</text>
</comment>
<comment type="subcellular location">
    <subcellularLocation>
        <location evidence="2">Cell membrane</location>
        <topology evidence="2">Multi-pass membrane protein</topology>
    </subcellularLocation>
</comment>
<comment type="similarity">
    <text evidence="2">Belongs to the BcrC/YbjG family.</text>
</comment>
<protein>
    <recommendedName>
        <fullName>Bacitracin transport permease protein BcrC</fullName>
    </recommendedName>
</protein>
<reference key="1">
    <citation type="journal article" date="1995" name="Mol. Microbiol.">
        <title>Bacillus licheniformis bacitracin-resistance ABC transporter: relationship to mammalian multidrug resistance.</title>
        <authorList>
            <person name="Podlesek Z."/>
            <person name="Comino A."/>
            <person name="Herzog-Velikonja B."/>
            <person name="Zgur-Bertok D."/>
            <person name="Komel R."/>
            <person name="Grabnar M."/>
        </authorList>
    </citation>
    <scope>NUCLEOTIDE SEQUENCE [GENOMIC DNA]</scope>
    <source>
        <strain>ATCC 9945A / NCIMB 11709</strain>
    </source>
</reference>
<reference key="2">
    <citation type="journal article" date="1997" name="Chem. Biol.">
        <title>The bacitracin biosynthesis operon of Bacillus licheniformis ATCC 10716: molecular characterization of three multi-modular peptide synthetases.</title>
        <authorList>
            <person name="Konz D."/>
            <person name="Klens A."/>
            <person name="Schoergendorfer K."/>
            <person name="Marahiel M.A."/>
        </authorList>
    </citation>
    <scope>NUCLEOTIDE SEQUENCE [GENOMIC DNA]</scope>
    <source>
        <strain>ATCC 10716 / DSM 603 / NBRC 12199 / NCIMB 8874 / Tracy I</strain>
    </source>
</reference>
<evidence type="ECO:0000255" key="1"/>
<evidence type="ECO:0000305" key="2"/>
<sequence>MSFSELNIDAFRFINDLGKEYSMLNPVVYFLAEYMMYFLALGLVVYWLTRTTKNRLMVIYAVIAFVVAEILGKIMGSLHSNYQPFATLPNVNKLIEHEIDNSFPSDHTILFFSIGFLIFLFHKKTGWLWLVLAFAVGISRIWSGVHYPLDVAAGALLGVLSALFVFWTAPKLSFIHQMLSLYEKVEQRIVPSKNKSNDKSKNF</sequence>
<dbReference type="EMBL" id="L20573">
    <property type="protein sequence ID" value="AAA99503.1"/>
    <property type="molecule type" value="Unassigned_DNA"/>
</dbReference>
<dbReference type="EMBL" id="AF007865">
    <property type="protein sequence ID" value="AAD21215.1"/>
    <property type="molecule type" value="Genomic_DNA"/>
</dbReference>
<dbReference type="PIR" id="T31684">
    <property type="entry name" value="T31684"/>
</dbReference>
<dbReference type="SMR" id="P42334"/>
<dbReference type="DrugBank" id="DB00626">
    <property type="generic name" value="Bacitracin"/>
</dbReference>
<dbReference type="CARD" id="ARO:3003250">
    <property type="molecule name" value="bcrC"/>
    <property type="mechanism identifier" value="ARO:0001001"/>
    <property type="mechanism name" value="antibiotic target alteration"/>
</dbReference>
<dbReference type="GO" id="GO:0005886">
    <property type="term" value="C:plasma membrane"/>
    <property type="evidence" value="ECO:0007669"/>
    <property type="project" value="UniProtKB-SubCell"/>
</dbReference>
<dbReference type="GO" id="GO:0050380">
    <property type="term" value="F:undecaprenyl-diphosphatase activity"/>
    <property type="evidence" value="ECO:0007669"/>
    <property type="project" value="InterPro"/>
</dbReference>
<dbReference type="GO" id="GO:0046677">
    <property type="term" value="P:response to antibiotic"/>
    <property type="evidence" value="ECO:0007669"/>
    <property type="project" value="UniProtKB-KW"/>
</dbReference>
<dbReference type="CDD" id="cd03385">
    <property type="entry name" value="PAP2_BcrC_like"/>
    <property type="match status" value="1"/>
</dbReference>
<dbReference type="Gene3D" id="1.20.144.10">
    <property type="entry name" value="Phosphatidic acid phosphatase type 2/haloperoxidase"/>
    <property type="match status" value="1"/>
</dbReference>
<dbReference type="InterPro" id="IPR036938">
    <property type="entry name" value="P_Acid_Pase_2/haloperoxi_sf"/>
</dbReference>
<dbReference type="InterPro" id="IPR000326">
    <property type="entry name" value="P_Acid_Pase_2/haloperoxidase"/>
</dbReference>
<dbReference type="InterPro" id="IPR033879">
    <property type="entry name" value="UPP_Pase"/>
</dbReference>
<dbReference type="PANTHER" id="PTHR14969:SF13">
    <property type="entry name" value="AT30094P"/>
    <property type="match status" value="1"/>
</dbReference>
<dbReference type="PANTHER" id="PTHR14969">
    <property type="entry name" value="SPHINGOSINE-1-PHOSPHATE PHOSPHOHYDROLASE"/>
    <property type="match status" value="1"/>
</dbReference>
<dbReference type="Pfam" id="PF01569">
    <property type="entry name" value="PAP2"/>
    <property type="match status" value="1"/>
</dbReference>
<dbReference type="SMART" id="SM00014">
    <property type="entry name" value="acidPPc"/>
    <property type="match status" value="1"/>
</dbReference>
<dbReference type="SUPFAM" id="SSF48317">
    <property type="entry name" value="Acid phosphatase/Vanadium-dependent haloperoxidase"/>
    <property type="match status" value="1"/>
</dbReference>